<evidence type="ECO:0000250" key="1"/>
<evidence type="ECO:0000269" key="2">
    <source>
    </source>
</evidence>
<evidence type="ECO:0000269" key="3">
    <source>
    </source>
</evidence>
<evidence type="ECO:0000269" key="4">
    <source>
    </source>
</evidence>
<evidence type="ECO:0000305" key="5"/>
<reference key="1">
    <citation type="journal article" date="1987" name="Nucleic Acids Res.">
        <title>Rapid sequencing of cloned DNA using a transposon for bidirectional priming: sequence of the Escherichia coli K-12 avtA gene.</title>
        <authorList>
            <person name="Liu L."/>
            <person name="Whalen W."/>
            <person name="Das A."/>
            <person name="Berg C.M."/>
        </authorList>
    </citation>
    <scope>PRELIMINARY NUCLEOTIDE SEQUENCE [GENOMIC DNA]</scope>
    <source>
        <strain>K12</strain>
    </source>
</reference>
<reference key="2">
    <citation type="journal article" date="1994" name="Nucleic Acids Res.">
        <title>Analysis of the Escherichia coli genome. V. DNA sequence of the region from 76.0 to 81.5 minutes.</title>
        <authorList>
            <person name="Sofia H.J."/>
            <person name="Burland V."/>
            <person name="Daniels D.L."/>
            <person name="Plunkett G. III"/>
            <person name="Blattner F.R."/>
        </authorList>
    </citation>
    <scope>NUCLEOTIDE SEQUENCE [LARGE SCALE GENOMIC DNA]</scope>
    <source>
        <strain>K12 / MG1655 / ATCC 47076</strain>
    </source>
</reference>
<reference key="3">
    <citation type="journal article" date="1997" name="Science">
        <title>The complete genome sequence of Escherichia coli K-12.</title>
        <authorList>
            <person name="Blattner F.R."/>
            <person name="Plunkett G. III"/>
            <person name="Bloch C.A."/>
            <person name="Perna N.T."/>
            <person name="Burland V."/>
            <person name="Riley M."/>
            <person name="Collado-Vides J."/>
            <person name="Glasner J.D."/>
            <person name="Rode C.K."/>
            <person name="Mayhew G.F."/>
            <person name="Gregor J."/>
            <person name="Davis N.W."/>
            <person name="Kirkpatrick H.A."/>
            <person name="Goeden M.A."/>
            <person name="Rose D.J."/>
            <person name="Mau B."/>
            <person name="Shao Y."/>
        </authorList>
    </citation>
    <scope>NUCLEOTIDE SEQUENCE [LARGE SCALE GENOMIC DNA]</scope>
    <source>
        <strain>K12 / MG1655 / ATCC 47076</strain>
    </source>
</reference>
<reference key="4">
    <citation type="journal article" date="2006" name="Nucleic Acids Res.">
        <title>Escherichia coli K-12: a cooperatively developed annotation snapshot -- 2005.</title>
        <authorList>
            <person name="Riley M."/>
            <person name="Abe T."/>
            <person name="Arnaud M.B."/>
            <person name="Berlyn M.K.B."/>
            <person name="Blattner F.R."/>
            <person name="Chaudhuri R.R."/>
            <person name="Glasner J.D."/>
            <person name="Horiuchi T."/>
            <person name="Keseler I.M."/>
            <person name="Kosuge T."/>
            <person name="Mori H."/>
            <person name="Perna N.T."/>
            <person name="Plunkett G. III"/>
            <person name="Rudd K.E."/>
            <person name="Serres M.H."/>
            <person name="Thomas G.H."/>
            <person name="Thomson N.R."/>
            <person name="Wishart D."/>
            <person name="Wanner B.L."/>
        </authorList>
    </citation>
    <scope>SEQUENCE REVISION TO 208</scope>
</reference>
<reference key="5">
    <citation type="journal article" date="2006" name="Mol. Syst. Biol.">
        <title>Highly accurate genome sequences of Escherichia coli K-12 strains MG1655 and W3110.</title>
        <authorList>
            <person name="Hayashi K."/>
            <person name="Morooka N."/>
            <person name="Yamamoto Y."/>
            <person name="Fujita K."/>
            <person name="Isono K."/>
            <person name="Choi S."/>
            <person name="Ohtsubo E."/>
            <person name="Baba T."/>
            <person name="Wanner B.L."/>
            <person name="Mori H."/>
            <person name="Horiuchi T."/>
        </authorList>
    </citation>
    <scope>NUCLEOTIDE SEQUENCE [LARGE SCALE GENOMIC DNA]</scope>
    <source>
        <strain>K12 / W3110 / ATCC 27325 / DSM 5911</strain>
    </source>
</reference>
<reference key="6">
    <citation type="journal article" date="1953" name="J. Biol. Chem.">
        <title>Transamination in Escherichia coli.</title>
        <authorList>
            <person name="Rudman D."/>
            <person name="Meister A."/>
        </authorList>
    </citation>
    <scope>FUNCTION AS AN AMINOTRANSFERASE</scope>
</reference>
<reference key="7">
    <citation type="journal article" date="1984" name="J. Bacteriol.">
        <title>Gratuitous repression of avtA in Escherichia coli and Salmonella typhimurium.</title>
        <authorList>
            <person name="Whalen W.A."/>
            <person name="Berg C.M."/>
        </authorList>
    </citation>
    <scope>INDUCTION</scope>
</reference>
<reference key="8">
    <citation type="journal article" date="2010" name="J. Bacteriol.">
        <title>Genetics and regulation of the major enzymes of alanine synthesis in Escherichia coli.</title>
        <authorList>
            <person name="Kim S.H."/>
            <person name="Schneider B.L."/>
            <person name="Reitzer L."/>
        </authorList>
    </citation>
    <scope>FUNCTION IN ALANINE BIOSYNTHESIS</scope>
    <scope>INDUCTION</scope>
</reference>
<dbReference type="EC" id="2.6.1.66"/>
<dbReference type="EMBL" id="Y00490">
    <property type="protein sequence ID" value="CAA68546.1"/>
    <property type="status" value="ALT_SEQ"/>
    <property type="molecule type" value="Genomic_DNA"/>
</dbReference>
<dbReference type="EMBL" id="U00039">
    <property type="protein sequence ID" value="AAB18549.1"/>
    <property type="molecule type" value="Genomic_DNA"/>
</dbReference>
<dbReference type="EMBL" id="U00096">
    <property type="protein sequence ID" value="AAT48193.1"/>
    <property type="molecule type" value="Genomic_DNA"/>
</dbReference>
<dbReference type="EMBL" id="AP009048">
    <property type="protein sequence ID" value="BAE77721.1"/>
    <property type="molecule type" value="Genomic_DNA"/>
</dbReference>
<dbReference type="PIR" id="S47793">
    <property type="entry name" value="S47793"/>
</dbReference>
<dbReference type="RefSeq" id="WP_000144363.1">
    <property type="nucleotide sequence ID" value="NZ_LN832404.1"/>
</dbReference>
<dbReference type="RefSeq" id="YP_026231.1">
    <property type="nucleotide sequence ID" value="NC_000913.3"/>
</dbReference>
<dbReference type="SMR" id="P09053"/>
<dbReference type="BioGRID" id="4259371">
    <property type="interactions" value="141"/>
</dbReference>
<dbReference type="FunCoup" id="P09053">
    <property type="interactions" value="91"/>
</dbReference>
<dbReference type="IntAct" id="P09053">
    <property type="interactions" value="1"/>
</dbReference>
<dbReference type="STRING" id="511145.b3572"/>
<dbReference type="jPOST" id="P09053"/>
<dbReference type="PaxDb" id="511145-b3572"/>
<dbReference type="EnsemblBacteria" id="AAT48193">
    <property type="protein sequence ID" value="AAT48193"/>
    <property type="gene ID" value="b3572"/>
</dbReference>
<dbReference type="GeneID" id="948087"/>
<dbReference type="KEGG" id="ecj:JW5652"/>
<dbReference type="KEGG" id="eco:b3572"/>
<dbReference type="KEGG" id="ecoc:C3026_19365"/>
<dbReference type="PATRIC" id="fig|1411691.4.peg.3140"/>
<dbReference type="EchoBASE" id="EB0105"/>
<dbReference type="eggNOG" id="COG3977">
    <property type="taxonomic scope" value="Bacteria"/>
</dbReference>
<dbReference type="HOGENOM" id="CLU_053657_0_0_6"/>
<dbReference type="InParanoid" id="P09053"/>
<dbReference type="OMA" id="IFSRPCN"/>
<dbReference type="OrthoDB" id="5889947at2"/>
<dbReference type="PhylomeDB" id="P09053"/>
<dbReference type="BioCyc" id="EcoCyc:VALINE-PYRUVATE-AMINOTRANSFER-MONOMER"/>
<dbReference type="BioCyc" id="MetaCyc:VALINE-PYRUVATE-AMINOTRANSFER-MONOMER"/>
<dbReference type="BRENDA" id="2.6.1.66">
    <property type="organism ID" value="2026"/>
</dbReference>
<dbReference type="PRO" id="PR:P09053"/>
<dbReference type="Proteomes" id="UP000000625">
    <property type="component" value="Chromosome"/>
</dbReference>
<dbReference type="GO" id="GO:0005829">
    <property type="term" value="C:cytosol"/>
    <property type="evidence" value="ECO:0000314"/>
    <property type="project" value="EcoCyc"/>
</dbReference>
<dbReference type="GO" id="GO:0030170">
    <property type="term" value="F:pyridoxal phosphate binding"/>
    <property type="evidence" value="ECO:0007669"/>
    <property type="project" value="InterPro"/>
</dbReference>
<dbReference type="GO" id="GO:0008483">
    <property type="term" value="F:transaminase activity"/>
    <property type="evidence" value="ECO:0000269"/>
    <property type="project" value="EcoCyc"/>
</dbReference>
<dbReference type="GO" id="GO:0009042">
    <property type="term" value="F:valine-pyruvate transaminase activity"/>
    <property type="evidence" value="ECO:0000314"/>
    <property type="project" value="EcoCyc"/>
</dbReference>
<dbReference type="GO" id="GO:1901605">
    <property type="term" value="P:alpha-amino acid metabolic process"/>
    <property type="evidence" value="ECO:0000318"/>
    <property type="project" value="GO_Central"/>
</dbReference>
<dbReference type="GO" id="GO:0030632">
    <property type="term" value="P:D-alanine biosynthetic process"/>
    <property type="evidence" value="ECO:0000315"/>
    <property type="project" value="UniProtKB"/>
</dbReference>
<dbReference type="GO" id="GO:0042852">
    <property type="term" value="P:L-alanine biosynthetic process"/>
    <property type="evidence" value="ECO:0000269"/>
    <property type="project" value="EcoCyc"/>
</dbReference>
<dbReference type="GO" id="GO:0009099">
    <property type="term" value="P:L-valine biosynthetic process"/>
    <property type="evidence" value="ECO:0000316"/>
    <property type="project" value="EcoCyc"/>
</dbReference>
<dbReference type="CDD" id="cd00609">
    <property type="entry name" value="AAT_like"/>
    <property type="match status" value="1"/>
</dbReference>
<dbReference type="FunFam" id="3.40.640.10:FF:000045">
    <property type="entry name" value="Valine--pyruvate aminotransferase"/>
    <property type="match status" value="1"/>
</dbReference>
<dbReference type="Gene3D" id="3.40.640.10">
    <property type="entry name" value="Type I PLP-dependent aspartate aminotransferase-like (Major domain)"/>
    <property type="match status" value="1"/>
</dbReference>
<dbReference type="InterPro" id="IPR004839">
    <property type="entry name" value="Aminotransferase_I/II_large"/>
</dbReference>
<dbReference type="InterPro" id="IPR050859">
    <property type="entry name" value="Class-I_PLP-dep_aminotransf"/>
</dbReference>
<dbReference type="InterPro" id="IPR015424">
    <property type="entry name" value="PyrdxlP-dep_Trfase"/>
</dbReference>
<dbReference type="InterPro" id="IPR015421">
    <property type="entry name" value="PyrdxlP-dep_Trfase_major"/>
</dbReference>
<dbReference type="NCBIfam" id="NF006963">
    <property type="entry name" value="PRK09440.1-1"/>
    <property type="match status" value="1"/>
</dbReference>
<dbReference type="NCBIfam" id="NF006964">
    <property type="entry name" value="PRK09440.1-2"/>
    <property type="match status" value="1"/>
</dbReference>
<dbReference type="NCBIfam" id="NF006966">
    <property type="entry name" value="PRK09440.1-4"/>
    <property type="match status" value="1"/>
</dbReference>
<dbReference type="NCBIfam" id="NF006967">
    <property type="entry name" value="PRK09440.1-5"/>
    <property type="match status" value="1"/>
</dbReference>
<dbReference type="PANTHER" id="PTHR42790">
    <property type="entry name" value="AMINOTRANSFERASE"/>
    <property type="match status" value="1"/>
</dbReference>
<dbReference type="PANTHER" id="PTHR42790:SF4">
    <property type="entry name" value="VALINE--PYRUVATE AMINOTRANSFERASE"/>
    <property type="match status" value="1"/>
</dbReference>
<dbReference type="Pfam" id="PF00155">
    <property type="entry name" value="Aminotran_1_2"/>
    <property type="match status" value="1"/>
</dbReference>
<dbReference type="SUPFAM" id="SSF53383">
    <property type="entry name" value="PLP-dependent transferases"/>
    <property type="match status" value="1"/>
</dbReference>
<protein>
    <recommendedName>
        <fullName>Valine--pyruvate aminotransferase</fullName>
        <ecNumber>2.6.1.66</ecNumber>
    </recommendedName>
    <alternativeName>
        <fullName>Alanine--valine transaminase</fullName>
    </alternativeName>
    <alternativeName>
        <fullName>Transaminase C</fullName>
    </alternativeName>
</protein>
<proteinExistence type="evidence at protein level"/>
<gene>
    <name type="primary">avtA</name>
    <name type="ordered locus">b3572</name>
    <name type="ordered locus">JW5652</name>
</gene>
<accession>P09053</accession>
<accession>Q2M7N5</accession>
<accession>Q6BF21</accession>
<comment type="function">
    <text evidence="2 3">Involved in the biosynthesis of alanine.</text>
</comment>
<comment type="catalytic activity">
    <reaction>
        <text>L-valine + pyruvate = 3-methyl-2-oxobutanoate + L-alanine</text>
        <dbReference type="Rhea" id="RHEA:22912"/>
        <dbReference type="ChEBI" id="CHEBI:11851"/>
        <dbReference type="ChEBI" id="CHEBI:15361"/>
        <dbReference type="ChEBI" id="CHEBI:57762"/>
        <dbReference type="ChEBI" id="CHEBI:57972"/>
        <dbReference type="EC" id="2.6.1.66"/>
    </reaction>
</comment>
<comment type="cofactor">
    <cofactor>
        <name>pyridoxal 5'-phosphate</name>
        <dbReference type="ChEBI" id="CHEBI:597326"/>
    </cofactor>
</comment>
<comment type="subunit">
    <text evidence="1">Homodimer.</text>
</comment>
<comment type="subcellular location">
    <subcellularLocation>
        <location evidence="1">Cytoplasm</location>
    </subcellularLocation>
</comment>
<comment type="induction">
    <text evidence="3 4">Modestly repressed by alanine and leucine via Lrp. Amino acid limitation causes repression by promoting the accumulation of L-alanine or L-leucine or both. AvtA is also repressed by L-alpha-aminobutyric acid and other nonprotein amino acids which are structurally similar to L-alanine.</text>
</comment>
<comment type="similarity">
    <text evidence="5">Belongs to the class-I pyridoxal-phosphate-dependent aminotransferase family.</text>
</comment>
<comment type="sequence caution" evidence="5">
    <conflict type="erroneous translation">
        <sequence resource="EMBL-CDS" id="CAA68546"/>
    </conflict>
    <text>Wrong choice of frame.</text>
</comment>
<comment type="sequence caution" evidence="5">
    <conflict type="miscellaneous discrepancy">
        <sequence resource="EMBL-CDS" id="CAA68546"/>
    </conflict>
</comment>
<name>AVTA_ECOLI</name>
<feature type="chain" id="PRO_0000123941" description="Valine--pyruvate aminotransferase">
    <location>
        <begin position="1"/>
        <end position="417"/>
    </location>
</feature>
<feature type="modified residue" description="N6-(pyridoxal phosphate)lysine" evidence="1">
    <location>
        <position position="249"/>
    </location>
</feature>
<feature type="sequence conflict" description="In Ref. 2; AAB18549." evidence="5" ref="2">
    <original>A</original>
    <variation>G</variation>
    <location>
        <position position="208"/>
    </location>
</feature>
<sequence>MTFSLFGDKFTRHSGITLLMEDLNDGLRTPGAIMLGGGNPAQIPEMQDYFQTLLTDMLESGKATDALCNYDGPQGKTELLTLLAGMLREKLGWDIEPQNIALTNGSQSAFFYLFNLFAGRRADGRVKKVLFPLAPEYIGYADAGLEEDLFVSARPNIELLPEGQFKYHVDFEHLHIGEETGMICVSRPTNPTGNVITDEELLKLDALANQHGIPLVIDNAYGVPFPGIIFSEARPLWNPNIVLCMSLSKLGLPGSRCGIIIANEKIITAITNMNGIISLAPGGIGPAMMCEMIKRNDLLRLSETVIKPFYYQRVQETIAIIRRYLPENRCLIHKPEGAIFLWLWFKDLPITTKQLYQRLKARGVLMVPGHNFFPGLDKPWPHTHQCMRMNYVPEPEKIEAGVKILAEEIERAWAESH</sequence>
<keyword id="KW-0032">Aminotransferase</keyword>
<keyword id="KW-0963">Cytoplasm</keyword>
<keyword id="KW-0663">Pyridoxal phosphate</keyword>
<keyword id="KW-1185">Reference proteome</keyword>
<keyword id="KW-0808">Transferase</keyword>
<organism>
    <name type="scientific">Escherichia coli (strain K12)</name>
    <dbReference type="NCBI Taxonomy" id="83333"/>
    <lineage>
        <taxon>Bacteria</taxon>
        <taxon>Pseudomonadati</taxon>
        <taxon>Pseudomonadota</taxon>
        <taxon>Gammaproteobacteria</taxon>
        <taxon>Enterobacterales</taxon>
        <taxon>Enterobacteriaceae</taxon>
        <taxon>Escherichia</taxon>
    </lineage>
</organism>